<evidence type="ECO:0000255" key="1">
    <source>
        <dbReference type="PROSITE-ProRule" id="PRU01210"/>
    </source>
</evidence>
<evidence type="ECO:0000269" key="2">
    <source>
    </source>
</evidence>
<evidence type="ECO:0000303" key="3">
    <source>
    </source>
</evidence>
<evidence type="ECO:0000305" key="4"/>
<evidence type="ECO:0000305" key="5">
    <source>
    </source>
</evidence>
<protein>
    <recommendedName>
        <fullName evidence="3">Kurtoxin-like I</fullName>
        <shortName evidence="3">KLI</shortName>
    </recommendedName>
    <alternativeName>
        <fullName evidence="4">Toxin PgKL1</fullName>
    </alternativeName>
</protein>
<organism>
    <name type="scientific">Parabuthus granulatus</name>
    <name type="common">Granulated thick-tailed scorpion</name>
    <name type="synonym">Androctonus granulatus</name>
    <dbReference type="NCBI Taxonomy" id="242110"/>
    <lineage>
        <taxon>Eukaryota</taxon>
        <taxon>Metazoa</taxon>
        <taxon>Ecdysozoa</taxon>
        <taxon>Arthropoda</taxon>
        <taxon>Chelicerata</taxon>
        <taxon>Arachnida</taxon>
        <taxon>Scorpiones</taxon>
        <taxon>Buthida</taxon>
        <taxon>Buthoidea</taxon>
        <taxon>Buthidae</taxon>
        <taxon>Parabuthus</taxon>
    </lineage>
</organism>
<sequence>KIDGYPVDNWNCKRICWYNNKYCYDLCKGLKADSGYCWGWTLSCYCEGLPDNARIKRGGRCN</sequence>
<feature type="chain" id="PRO_0000305104" description="Kurtoxin-like I">
    <location>
        <begin position="1"/>
        <end position="62"/>
    </location>
</feature>
<feature type="domain" description="LCN-type CS-alpha/beta" evidence="1">
    <location>
        <begin position="2"/>
        <end position="62"/>
    </location>
</feature>
<feature type="disulfide bond" evidence="1">
    <location>
        <begin position="12"/>
        <end position="61"/>
    </location>
</feature>
<feature type="disulfide bond" evidence="1">
    <location>
        <begin position="16"/>
        <end position="37"/>
    </location>
</feature>
<feature type="disulfide bond" evidence="1">
    <location>
        <begin position="23"/>
        <end position="44"/>
    </location>
</feature>
<feature type="disulfide bond" evidence="1">
    <location>
        <begin position="27"/>
        <end position="46"/>
    </location>
</feature>
<keyword id="KW-0108">Calcium channel impairing toxin</keyword>
<keyword id="KW-0903">Direct protein sequencing</keyword>
<keyword id="KW-1015">Disulfide bond</keyword>
<keyword id="KW-0872">Ion channel impairing toxin</keyword>
<keyword id="KW-0528">Neurotoxin</keyword>
<keyword id="KW-0964">Secreted</keyword>
<keyword id="KW-0800">Toxin</keyword>
<keyword id="KW-1218">Voltage-gated calcium channel impairing toxin</keyword>
<keyword id="KW-0738">Voltage-gated sodium channel impairing toxin</keyword>
<proteinExistence type="evidence at protein level"/>
<comment type="function">
    <text evidence="2">This neurotoxin acts on sodium and calcium channels. Potently inhibits native voltage-gated T-type calcium channel activity in mouse male germ cells and weakly blocks Cav3.3/CACNA1I channels expressed in Xenopus oocytes. In addition, significantly slows the inactivation of activated recombinant sodium channels (Nav1.5/SCN5A).</text>
</comment>
<comment type="subcellular location">
    <subcellularLocation>
        <location evidence="2">Secreted</location>
    </subcellularLocation>
</comment>
<comment type="tissue specificity">
    <text evidence="5">Expressed by the venom gland.</text>
</comment>
<comment type="domain">
    <text evidence="4">Has the structural arrangement of an alpha-helix connected to antiparallel beta-sheets by disulfide bonds (CS-alpha/beta).</text>
</comment>
<comment type="mass spectrometry"/>
<comment type="similarity">
    <text evidence="4">Belongs to the long (4 C-C) scorpion toxin superfamily. Sodium channel inhibitor family. Alpha subfamily.</text>
</comment>
<name>KURT1_PARGR</name>
<reference key="1">
    <citation type="journal article" date="2002" name="Biochem. Biophys. Res. Commun.">
        <title>Two new scorpion toxins that target voltage-gated Ca2+ and Na+ channels.</title>
        <authorList>
            <person name="Olamendi-Portugal T."/>
            <person name="Garcia B.I."/>
            <person name="Lopez-Gonzalez I."/>
            <person name="Van Der Walt J."/>
            <person name="Dyason K."/>
            <person name="Ulens C."/>
            <person name="Tytgat J."/>
            <person name="Felix R."/>
            <person name="Darszon A."/>
            <person name="Possani L.D."/>
        </authorList>
    </citation>
    <scope>NUCLEOTIDE SEQUENCE [MRNA]</scope>
    <scope>PROTEIN SEQUENCE</scope>
    <scope>MASS SPECTROMETRY</scope>
    <scope>FUNCTION</scope>
    <scope>SUBCELLULAR LOCATION</scope>
    <source>
        <tissue>Venom</tissue>
        <tissue>Venom gland</tissue>
    </source>
</reference>
<accession>P0C5F0</accession>
<dbReference type="SMR" id="P0C5F0"/>
<dbReference type="GO" id="GO:0005576">
    <property type="term" value="C:extracellular region"/>
    <property type="evidence" value="ECO:0007669"/>
    <property type="project" value="UniProtKB-SubCell"/>
</dbReference>
<dbReference type="GO" id="GO:0005246">
    <property type="term" value="F:calcium channel regulator activity"/>
    <property type="evidence" value="ECO:0007669"/>
    <property type="project" value="UniProtKB-KW"/>
</dbReference>
<dbReference type="GO" id="GO:0019871">
    <property type="term" value="F:sodium channel inhibitor activity"/>
    <property type="evidence" value="ECO:0007669"/>
    <property type="project" value="InterPro"/>
</dbReference>
<dbReference type="GO" id="GO:0090729">
    <property type="term" value="F:toxin activity"/>
    <property type="evidence" value="ECO:0007669"/>
    <property type="project" value="UniProtKB-KW"/>
</dbReference>
<dbReference type="GO" id="GO:0006952">
    <property type="term" value="P:defense response"/>
    <property type="evidence" value="ECO:0007669"/>
    <property type="project" value="InterPro"/>
</dbReference>
<dbReference type="CDD" id="cd23106">
    <property type="entry name" value="neurotoxins_LC_scorpion"/>
    <property type="match status" value="1"/>
</dbReference>
<dbReference type="Gene3D" id="3.30.30.10">
    <property type="entry name" value="Knottin, scorpion toxin-like"/>
    <property type="match status" value="1"/>
</dbReference>
<dbReference type="InterPro" id="IPR044062">
    <property type="entry name" value="LCN-type_CS_alpha_beta_dom"/>
</dbReference>
<dbReference type="InterPro" id="IPR003614">
    <property type="entry name" value="Scorpion_toxin-like"/>
</dbReference>
<dbReference type="InterPro" id="IPR036574">
    <property type="entry name" value="Scorpion_toxin-like_sf"/>
</dbReference>
<dbReference type="InterPro" id="IPR018218">
    <property type="entry name" value="Scorpion_toxinL"/>
</dbReference>
<dbReference type="InterPro" id="IPR002061">
    <property type="entry name" value="Scorpion_toxinL/defensin"/>
</dbReference>
<dbReference type="Pfam" id="PF00537">
    <property type="entry name" value="Toxin_3"/>
    <property type="match status" value="1"/>
</dbReference>
<dbReference type="PRINTS" id="PR00285">
    <property type="entry name" value="SCORPNTOXIN"/>
</dbReference>
<dbReference type="SMART" id="SM00505">
    <property type="entry name" value="Knot1"/>
    <property type="match status" value="1"/>
</dbReference>
<dbReference type="SUPFAM" id="SSF57095">
    <property type="entry name" value="Scorpion toxin-like"/>
    <property type="match status" value="1"/>
</dbReference>
<dbReference type="PROSITE" id="PS51863">
    <property type="entry name" value="LCN_CSAB"/>
    <property type="match status" value="1"/>
</dbReference>